<gene>
    <name type="primary">MT-CYB</name>
    <name type="synonym">COB</name>
    <name type="synonym">CYTB</name>
    <name type="synonym">MTCYB</name>
</gene>
<reference key="1">
    <citation type="journal article" date="1999" name="Proc. R. Soc. B">
        <title>Evolutionary affinities of the enigmatic saola (Pseudoryx nghetinhensis) in the context of the molecular phylogeny of Bovidae.</title>
        <authorList>
            <person name="Hassanin A."/>
            <person name="Douzery E.J.P."/>
        </authorList>
    </citation>
    <scope>NUCLEOTIDE SEQUENCE [GENOMIC DNA]</scope>
</reference>
<reference key="2">
    <citation type="journal article" date="1999" name="Mol. Phylogenet. Evol.">
        <title>Cytochrome b phylogeny of the family bovidae: resolution within the alcelaphini, antilopini, neotragini, and tragelaphini.</title>
        <authorList>
            <person name="Matthee C.A."/>
            <person name="Robinson T.J."/>
        </authorList>
    </citation>
    <scope>NUCLEOTIDE SEQUENCE [GENOMIC DNA]</scope>
</reference>
<name>CYB_TRAAN</name>
<proteinExistence type="inferred from homology"/>
<comment type="function">
    <text evidence="2">Component of the ubiquinol-cytochrome c reductase complex (complex III or cytochrome b-c1 complex) that is part of the mitochondrial respiratory chain. The b-c1 complex mediates electron transfer from ubiquinol to cytochrome c. Contributes to the generation of a proton gradient across the mitochondrial membrane that is then used for ATP synthesis.</text>
</comment>
<comment type="cofactor">
    <cofactor evidence="2">
        <name>heme b</name>
        <dbReference type="ChEBI" id="CHEBI:60344"/>
    </cofactor>
    <text evidence="2">Binds 2 heme b groups non-covalently.</text>
</comment>
<comment type="subunit">
    <text evidence="2">The cytochrome bc1 complex contains 11 subunits: 3 respiratory subunits (MT-CYB, CYC1 and UQCRFS1), 2 core proteins (UQCRC1 and UQCRC2) and 6 low-molecular weight proteins (UQCRH/QCR6, UQCRB/QCR7, UQCRQ/QCR8, UQCR10/QCR9, UQCR11/QCR10 and a cleavage product of UQCRFS1). This cytochrome bc1 complex then forms a dimer.</text>
</comment>
<comment type="subcellular location">
    <subcellularLocation>
        <location evidence="2">Mitochondrion inner membrane</location>
        <topology evidence="2">Multi-pass membrane protein</topology>
    </subcellularLocation>
</comment>
<comment type="miscellaneous">
    <text evidence="1">Heme 1 (or BL or b562) is low-potential and absorbs at about 562 nm, and heme 2 (or BH or b566) is high-potential and absorbs at about 566 nm.</text>
</comment>
<comment type="similarity">
    <text evidence="3 4">Belongs to the cytochrome b family.</text>
</comment>
<comment type="caution">
    <text evidence="2">The full-length protein contains only eight transmembrane helices, not nine as predicted by bioinformatics tools.</text>
</comment>
<feature type="chain" id="PRO_0000061674" description="Cytochrome b">
    <location>
        <begin position="1"/>
        <end position="379"/>
    </location>
</feature>
<feature type="transmembrane region" description="Helical" evidence="2">
    <location>
        <begin position="33"/>
        <end position="53"/>
    </location>
</feature>
<feature type="transmembrane region" description="Helical" evidence="2">
    <location>
        <begin position="77"/>
        <end position="98"/>
    </location>
</feature>
<feature type="transmembrane region" description="Helical" evidence="2">
    <location>
        <begin position="113"/>
        <end position="133"/>
    </location>
</feature>
<feature type="transmembrane region" description="Helical" evidence="2">
    <location>
        <begin position="178"/>
        <end position="198"/>
    </location>
</feature>
<feature type="transmembrane region" description="Helical" evidence="2">
    <location>
        <begin position="226"/>
        <end position="246"/>
    </location>
</feature>
<feature type="transmembrane region" description="Helical" evidence="2">
    <location>
        <begin position="288"/>
        <end position="308"/>
    </location>
</feature>
<feature type="transmembrane region" description="Helical" evidence="2">
    <location>
        <begin position="320"/>
        <end position="340"/>
    </location>
</feature>
<feature type="transmembrane region" description="Helical" evidence="2">
    <location>
        <begin position="347"/>
        <end position="367"/>
    </location>
</feature>
<feature type="binding site" description="axial binding residue" evidence="2">
    <location>
        <position position="83"/>
    </location>
    <ligand>
        <name>heme b</name>
        <dbReference type="ChEBI" id="CHEBI:60344"/>
        <label>b562</label>
    </ligand>
    <ligandPart>
        <name>Fe</name>
        <dbReference type="ChEBI" id="CHEBI:18248"/>
    </ligandPart>
</feature>
<feature type="binding site" description="axial binding residue" evidence="2">
    <location>
        <position position="97"/>
    </location>
    <ligand>
        <name>heme b</name>
        <dbReference type="ChEBI" id="CHEBI:60344"/>
        <label>b566</label>
    </ligand>
    <ligandPart>
        <name>Fe</name>
        <dbReference type="ChEBI" id="CHEBI:18248"/>
    </ligandPart>
</feature>
<feature type="binding site" description="axial binding residue" evidence="2">
    <location>
        <position position="182"/>
    </location>
    <ligand>
        <name>heme b</name>
        <dbReference type="ChEBI" id="CHEBI:60344"/>
        <label>b562</label>
    </ligand>
    <ligandPart>
        <name>Fe</name>
        <dbReference type="ChEBI" id="CHEBI:18248"/>
    </ligandPart>
</feature>
<feature type="binding site" description="axial binding residue" evidence="2">
    <location>
        <position position="196"/>
    </location>
    <ligand>
        <name>heme b</name>
        <dbReference type="ChEBI" id="CHEBI:60344"/>
        <label>b566</label>
    </ligand>
    <ligandPart>
        <name>Fe</name>
        <dbReference type="ChEBI" id="CHEBI:18248"/>
    </ligandPart>
</feature>
<feature type="binding site" evidence="2">
    <location>
        <position position="201"/>
    </location>
    <ligand>
        <name>a ubiquinone</name>
        <dbReference type="ChEBI" id="CHEBI:16389"/>
    </ligand>
</feature>
<feature type="sequence conflict" description="In Ref. 2; AAD13500." evidence="5" ref="2">
    <original>L</original>
    <variation>F</variation>
    <location>
        <position position="46"/>
    </location>
</feature>
<feature type="sequence conflict" description="In Ref. 2; AAD13500." evidence="5" ref="2">
    <original>K</original>
    <variation>E</variation>
    <location>
        <position position="311"/>
    </location>
</feature>
<evidence type="ECO:0000250" key="1"/>
<evidence type="ECO:0000250" key="2">
    <source>
        <dbReference type="UniProtKB" id="P00157"/>
    </source>
</evidence>
<evidence type="ECO:0000255" key="3">
    <source>
        <dbReference type="PROSITE-ProRule" id="PRU00967"/>
    </source>
</evidence>
<evidence type="ECO:0000255" key="4">
    <source>
        <dbReference type="PROSITE-ProRule" id="PRU00968"/>
    </source>
</evidence>
<evidence type="ECO:0000305" key="5"/>
<keyword id="KW-0249">Electron transport</keyword>
<keyword id="KW-0349">Heme</keyword>
<keyword id="KW-0408">Iron</keyword>
<keyword id="KW-0472">Membrane</keyword>
<keyword id="KW-0479">Metal-binding</keyword>
<keyword id="KW-0496">Mitochondrion</keyword>
<keyword id="KW-0999">Mitochondrion inner membrane</keyword>
<keyword id="KW-0679">Respiratory chain</keyword>
<keyword id="KW-0812">Transmembrane</keyword>
<keyword id="KW-1133">Transmembrane helix</keyword>
<keyword id="KW-0813">Transport</keyword>
<keyword id="KW-0830">Ubiquinone</keyword>
<protein>
    <recommendedName>
        <fullName>Cytochrome b</fullName>
    </recommendedName>
    <alternativeName>
        <fullName>Complex III subunit 3</fullName>
    </alternativeName>
    <alternativeName>
        <fullName>Complex III subunit III</fullName>
    </alternativeName>
    <alternativeName>
        <fullName>Cytochrome b-c1 complex subunit 3</fullName>
    </alternativeName>
    <alternativeName>
        <fullName>Ubiquinol-cytochrome-c reductase complex cytochrome b subunit</fullName>
    </alternativeName>
</protein>
<organism>
    <name type="scientific">Tragelaphus angasii</name>
    <name type="common">Nyala</name>
    <dbReference type="NCBI Taxonomy" id="66437"/>
    <lineage>
        <taxon>Eukaryota</taxon>
        <taxon>Metazoa</taxon>
        <taxon>Chordata</taxon>
        <taxon>Craniata</taxon>
        <taxon>Vertebrata</taxon>
        <taxon>Euteleostomi</taxon>
        <taxon>Mammalia</taxon>
        <taxon>Eutheria</taxon>
        <taxon>Laurasiatheria</taxon>
        <taxon>Artiodactyla</taxon>
        <taxon>Ruminantia</taxon>
        <taxon>Pecora</taxon>
        <taxon>Bovidae</taxon>
        <taxon>Bovinae</taxon>
        <taxon>Tragelaphus</taxon>
    </lineage>
</organism>
<geneLocation type="mitochondrion"/>
<dbReference type="EMBL" id="AF091633">
    <property type="protein sequence ID" value="AAD42706.1"/>
    <property type="molecule type" value="Genomic_DNA"/>
</dbReference>
<dbReference type="EMBL" id="AF022066">
    <property type="protein sequence ID" value="AAD13500.1"/>
    <property type="molecule type" value="Genomic_DNA"/>
</dbReference>
<dbReference type="RefSeq" id="YP_007626692.1">
    <property type="nucleotide sequence ID" value="NC_020748.1"/>
</dbReference>
<dbReference type="SMR" id="Q9TG16"/>
<dbReference type="GeneID" id="15089068"/>
<dbReference type="CTD" id="4519"/>
<dbReference type="GO" id="GO:0005743">
    <property type="term" value="C:mitochondrial inner membrane"/>
    <property type="evidence" value="ECO:0007669"/>
    <property type="project" value="UniProtKB-SubCell"/>
</dbReference>
<dbReference type="GO" id="GO:0045275">
    <property type="term" value="C:respiratory chain complex III"/>
    <property type="evidence" value="ECO:0007669"/>
    <property type="project" value="InterPro"/>
</dbReference>
<dbReference type="GO" id="GO:0046872">
    <property type="term" value="F:metal ion binding"/>
    <property type="evidence" value="ECO:0007669"/>
    <property type="project" value="UniProtKB-KW"/>
</dbReference>
<dbReference type="GO" id="GO:0008121">
    <property type="term" value="F:ubiquinol-cytochrome-c reductase activity"/>
    <property type="evidence" value="ECO:0007669"/>
    <property type="project" value="InterPro"/>
</dbReference>
<dbReference type="GO" id="GO:0006122">
    <property type="term" value="P:mitochondrial electron transport, ubiquinol to cytochrome c"/>
    <property type="evidence" value="ECO:0007669"/>
    <property type="project" value="TreeGrafter"/>
</dbReference>
<dbReference type="CDD" id="cd00290">
    <property type="entry name" value="cytochrome_b_C"/>
    <property type="match status" value="1"/>
</dbReference>
<dbReference type="CDD" id="cd00284">
    <property type="entry name" value="Cytochrome_b_N"/>
    <property type="match status" value="1"/>
</dbReference>
<dbReference type="FunFam" id="1.20.810.10:FF:000002">
    <property type="entry name" value="Cytochrome b"/>
    <property type="match status" value="1"/>
</dbReference>
<dbReference type="Gene3D" id="1.20.810.10">
    <property type="entry name" value="Cytochrome Bc1 Complex, Chain C"/>
    <property type="match status" value="1"/>
</dbReference>
<dbReference type="InterPro" id="IPR005798">
    <property type="entry name" value="Cyt_b/b6_C"/>
</dbReference>
<dbReference type="InterPro" id="IPR036150">
    <property type="entry name" value="Cyt_b/b6_C_sf"/>
</dbReference>
<dbReference type="InterPro" id="IPR005797">
    <property type="entry name" value="Cyt_b/b6_N"/>
</dbReference>
<dbReference type="InterPro" id="IPR027387">
    <property type="entry name" value="Cytb/b6-like_sf"/>
</dbReference>
<dbReference type="InterPro" id="IPR030689">
    <property type="entry name" value="Cytochrome_b"/>
</dbReference>
<dbReference type="InterPro" id="IPR048260">
    <property type="entry name" value="Cytochrome_b_C_euk/bac"/>
</dbReference>
<dbReference type="InterPro" id="IPR048259">
    <property type="entry name" value="Cytochrome_b_N_euk/bac"/>
</dbReference>
<dbReference type="InterPro" id="IPR016174">
    <property type="entry name" value="Di-haem_cyt_TM"/>
</dbReference>
<dbReference type="PANTHER" id="PTHR19271">
    <property type="entry name" value="CYTOCHROME B"/>
    <property type="match status" value="1"/>
</dbReference>
<dbReference type="PANTHER" id="PTHR19271:SF16">
    <property type="entry name" value="CYTOCHROME B"/>
    <property type="match status" value="1"/>
</dbReference>
<dbReference type="Pfam" id="PF00032">
    <property type="entry name" value="Cytochrom_B_C"/>
    <property type="match status" value="1"/>
</dbReference>
<dbReference type="Pfam" id="PF00033">
    <property type="entry name" value="Cytochrome_B"/>
    <property type="match status" value="1"/>
</dbReference>
<dbReference type="PIRSF" id="PIRSF038885">
    <property type="entry name" value="COB"/>
    <property type="match status" value="1"/>
</dbReference>
<dbReference type="SUPFAM" id="SSF81648">
    <property type="entry name" value="a domain/subunit of cytochrome bc1 complex (Ubiquinol-cytochrome c reductase)"/>
    <property type="match status" value="1"/>
</dbReference>
<dbReference type="SUPFAM" id="SSF81342">
    <property type="entry name" value="Transmembrane di-heme cytochromes"/>
    <property type="match status" value="1"/>
</dbReference>
<dbReference type="PROSITE" id="PS51003">
    <property type="entry name" value="CYTB_CTER"/>
    <property type="match status" value="1"/>
</dbReference>
<dbReference type="PROSITE" id="PS51002">
    <property type="entry name" value="CYTB_NTER"/>
    <property type="match status" value="1"/>
</dbReference>
<sequence>MTNIRKSHPLMKIVNNAFIDLPAPSNISSWWNFGSLLGVCLILQILTGLFLAMHYTSDTMTAFSSVTHICRDVNYGWIIRYMHANGASMFFICLYMHVGRGLYYGSYTFLETWNVGVILLFMVMATAFMGYVLPWGQMSFWGATVITNLLSAIPYIGTNLVEWIWGGFSVDKATLTRFFAFHFILPFIITALVMVHLLFLHETGSNNPTGISSDMDKIPFHPYYTIKDILGALLLILALMVLVLFTPDLLGDPDNYTPANPLNTPPHIKPEWYFLFAYAILRSIPNKLGGVLALVLSILILILMPLLHMSKQRSMMFRPLSQCLFWLLVADLLTLTWIGGQPVEHPYIIIGQLASIIYFLLILVLMPVISTIENNLLKW</sequence>
<accession>Q9TG16</accession>
<accession>Q9TGH4</accession>